<dbReference type="EMBL" id="AE000513">
    <property type="protein sequence ID" value="AAF11675.1"/>
    <property type="molecule type" value="Genomic_DNA"/>
</dbReference>
<dbReference type="PIR" id="F75312">
    <property type="entry name" value="F75312"/>
</dbReference>
<dbReference type="RefSeq" id="NP_295848.1">
    <property type="nucleotide sequence ID" value="NC_001263.1"/>
</dbReference>
<dbReference type="RefSeq" id="WP_010888756.1">
    <property type="nucleotide sequence ID" value="NC_001263.1"/>
</dbReference>
<dbReference type="SMR" id="Q9RSJ9"/>
<dbReference type="FunCoup" id="Q9RSJ9">
    <property type="interactions" value="503"/>
</dbReference>
<dbReference type="STRING" id="243230.DR_2125"/>
<dbReference type="PaxDb" id="243230-DR_2125"/>
<dbReference type="EnsemblBacteria" id="AAF11675">
    <property type="protein sequence ID" value="AAF11675"/>
    <property type="gene ID" value="DR_2125"/>
</dbReference>
<dbReference type="GeneID" id="69518367"/>
<dbReference type="KEGG" id="dra:DR_2125"/>
<dbReference type="PATRIC" id="fig|243230.17.peg.2348"/>
<dbReference type="eggNOG" id="COG0099">
    <property type="taxonomic scope" value="Bacteria"/>
</dbReference>
<dbReference type="HOGENOM" id="CLU_103849_1_2_0"/>
<dbReference type="InParanoid" id="Q9RSJ9"/>
<dbReference type="OrthoDB" id="9803610at2"/>
<dbReference type="Proteomes" id="UP000002524">
    <property type="component" value="Chromosome 1"/>
</dbReference>
<dbReference type="GO" id="GO:0005829">
    <property type="term" value="C:cytosol"/>
    <property type="evidence" value="ECO:0000318"/>
    <property type="project" value="GO_Central"/>
</dbReference>
<dbReference type="GO" id="GO:0015935">
    <property type="term" value="C:small ribosomal subunit"/>
    <property type="evidence" value="ECO:0000318"/>
    <property type="project" value="GO_Central"/>
</dbReference>
<dbReference type="GO" id="GO:0019843">
    <property type="term" value="F:rRNA binding"/>
    <property type="evidence" value="ECO:0007669"/>
    <property type="project" value="UniProtKB-UniRule"/>
</dbReference>
<dbReference type="GO" id="GO:0003735">
    <property type="term" value="F:structural constituent of ribosome"/>
    <property type="evidence" value="ECO:0007669"/>
    <property type="project" value="InterPro"/>
</dbReference>
<dbReference type="GO" id="GO:0000049">
    <property type="term" value="F:tRNA binding"/>
    <property type="evidence" value="ECO:0007669"/>
    <property type="project" value="UniProtKB-UniRule"/>
</dbReference>
<dbReference type="GO" id="GO:0006412">
    <property type="term" value="P:translation"/>
    <property type="evidence" value="ECO:0007669"/>
    <property type="project" value="UniProtKB-UniRule"/>
</dbReference>
<dbReference type="FunFam" id="1.10.8.50:FF:000001">
    <property type="entry name" value="30S ribosomal protein S13"/>
    <property type="match status" value="1"/>
</dbReference>
<dbReference type="FunFam" id="4.10.910.10:FF:000001">
    <property type="entry name" value="30S ribosomal protein S13"/>
    <property type="match status" value="1"/>
</dbReference>
<dbReference type="Gene3D" id="1.10.8.50">
    <property type="match status" value="1"/>
</dbReference>
<dbReference type="Gene3D" id="4.10.910.10">
    <property type="entry name" value="30s ribosomal protein s13, domain 2"/>
    <property type="match status" value="1"/>
</dbReference>
<dbReference type="HAMAP" id="MF_01315">
    <property type="entry name" value="Ribosomal_uS13"/>
    <property type="match status" value="1"/>
</dbReference>
<dbReference type="InterPro" id="IPR027437">
    <property type="entry name" value="Rbsml_uS13_C"/>
</dbReference>
<dbReference type="InterPro" id="IPR001892">
    <property type="entry name" value="Ribosomal_uS13"/>
</dbReference>
<dbReference type="InterPro" id="IPR010979">
    <property type="entry name" value="Ribosomal_uS13-like_H2TH"/>
</dbReference>
<dbReference type="InterPro" id="IPR019980">
    <property type="entry name" value="Ribosomal_uS13_bac-type"/>
</dbReference>
<dbReference type="InterPro" id="IPR018269">
    <property type="entry name" value="Ribosomal_uS13_CS"/>
</dbReference>
<dbReference type="NCBIfam" id="TIGR03631">
    <property type="entry name" value="uS13_bact"/>
    <property type="match status" value="1"/>
</dbReference>
<dbReference type="PANTHER" id="PTHR10871">
    <property type="entry name" value="30S RIBOSOMAL PROTEIN S13/40S RIBOSOMAL PROTEIN S18"/>
    <property type="match status" value="1"/>
</dbReference>
<dbReference type="PANTHER" id="PTHR10871:SF1">
    <property type="entry name" value="SMALL RIBOSOMAL SUBUNIT PROTEIN US13M"/>
    <property type="match status" value="1"/>
</dbReference>
<dbReference type="Pfam" id="PF00416">
    <property type="entry name" value="Ribosomal_S13"/>
    <property type="match status" value="1"/>
</dbReference>
<dbReference type="PIRSF" id="PIRSF002134">
    <property type="entry name" value="Ribosomal_S13"/>
    <property type="match status" value="1"/>
</dbReference>
<dbReference type="SUPFAM" id="SSF46946">
    <property type="entry name" value="S13-like H2TH domain"/>
    <property type="match status" value="1"/>
</dbReference>
<dbReference type="PROSITE" id="PS00646">
    <property type="entry name" value="RIBOSOMAL_S13_1"/>
    <property type="match status" value="1"/>
</dbReference>
<dbReference type="PROSITE" id="PS50159">
    <property type="entry name" value="RIBOSOMAL_S13_2"/>
    <property type="match status" value="1"/>
</dbReference>
<gene>
    <name evidence="1" type="primary">rpsM</name>
    <name type="ordered locus">DR_2125</name>
</gene>
<organism>
    <name type="scientific">Deinococcus radiodurans (strain ATCC 13939 / DSM 20539 / JCM 16871 / CCUG 27074 / LMG 4051 / NBRC 15346 / NCIMB 9279 / VKM B-1422 / R1)</name>
    <dbReference type="NCBI Taxonomy" id="243230"/>
    <lineage>
        <taxon>Bacteria</taxon>
        <taxon>Thermotogati</taxon>
        <taxon>Deinococcota</taxon>
        <taxon>Deinococci</taxon>
        <taxon>Deinococcales</taxon>
        <taxon>Deinococcaceae</taxon>
        <taxon>Deinococcus</taxon>
    </lineage>
</organism>
<name>RS13_DEIRA</name>
<reference key="1">
    <citation type="journal article" date="1999" name="Science">
        <title>Genome sequence of the radioresistant bacterium Deinococcus radiodurans R1.</title>
        <authorList>
            <person name="White O."/>
            <person name="Eisen J.A."/>
            <person name="Heidelberg J.F."/>
            <person name="Hickey E.K."/>
            <person name="Peterson J.D."/>
            <person name="Dodson R.J."/>
            <person name="Haft D.H."/>
            <person name="Gwinn M.L."/>
            <person name="Nelson W.C."/>
            <person name="Richardson D.L."/>
            <person name="Moffat K.S."/>
            <person name="Qin H."/>
            <person name="Jiang L."/>
            <person name="Pamphile W."/>
            <person name="Crosby M."/>
            <person name="Shen M."/>
            <person name="Vamathevan J.J."/>
            <person name="Lam P."/>
            <person name="McDonald L.A."/>
            <person name="Utterback T.R."/>
            <person name="Zalewski C."/>
            <person name="Makarova K.S."/>
            <person name="Aravind L."/>
            <person name="Daly M.J."/>
            <person name="Minton K.W."/>
            <person name="Fleischmann R.D."/>
            <person name="Ketchum K.A."/>
            <person name="Nelson K.E."/>
            <person name="Salzberg S.L."/>
            <person name="Smith H.O."/>
            <person name="Venter J.C."/>
            <person name="Fraser C.M."/>
        </authorList>
    </citation>
    <scope>NUCLEOTIDE SEQUENCE [LARGE SCALE GENOMIC DNA]</scope>
    <source>
        <strain>ATCC 13939 / DSM 20539 / JCM 16871 / CCUG 27074 / LMG 4051 / NBRC 15346 / NCIMB 9279 / VKM B-1422 / R1</strain>
    </source>
</reference>
<accession>Q9RSJ9</accession>
<sequence length="126" mass="14228">MARIAGIDLPREKRVEIALTYIYGIGLTRSKEILARTGVSPDTRVKNLSEAEQSTLREAIEKTYKVEGDLRNEVGQNIKRLMDIGAYRGLRHRRGLPVRGQRTKTNARTRKGPKKTVAGKKKATRK</sequence>
<comment type="function">
    <text evidence="1">Located at the top of the head of the 30S subunit, it contacts several helices of the 16S rRNA. In the 70S ribosome it contacts the 23S rRNA (bridge B1a) and protein L5 of the 50S subunit (bridge B1b), connecting the 2 subunits; these bridges are implicated in subunit movement. Contacts the tRNAs in the A and P-sites.</text>
</comment>
<comment type="subunit">
    <text evidence="1">Part of the 30S ribosomal subunit. Forms a loose heterodimer with protein S19. Forms two bridges to the 50S subunit in the 70S ribosome.</text>
</comment>
<comment type="similarity">
    <text evidence="1">Belongs to the universal ribosomal protein uS13 family.</text>
</comment>
<proteinExistence type="inferred from homology"/>
<feature type="chain" id="PRO_0000132088" description="Small ribosomal subunit protein uS13">
    <location>
        <begin position="1"/>
        <end position="126"/>
    </location>
</feature>
<feature type="region of interest" description="Disordered" evidence="2">
    <location>
        <begin position="92"/>
        <end position="126"/>
    </location>
</feature>
<keyword id="KW-1185">Reference proteome</keyword>
<keyword id="KW-0687">Ribonucleoprotein</keyword>
<keyword id="KW-0689">Ribosomal protein</keyword>
<keyword id="KW-0694">RNA-binding</keyword>
<keyword id="KW-0699">rRNA-binding</keyword>
<keyword id="KW-0820">tRNA-binding</keyword>
<evidence type="ECO:0000255" key="1">
    <source>
        <dbReference type="HAMAP-Rule" id="MF_01315"/>
    </source>
</evidence>
<evidence type="ECO:0000256" key="2">
    <source>
        <dbReference type="SAM" id="MobiDB-lite"/>
    </source>
</evidence>
<evidence type="ECO:0000305" key="3"/>
<protein>
    <recommendedName>
        <fullName evidence="1">Small ribosomal subunit protein uS13</fullName>
    </recommendedName>
    <alternativeName>
        <fullName evidence="3">30S ribosomal protein S13</fullName>
    </alternativeName>
</protein>